<proteinExistence type="inferred from homology"/>
<comment type="function">
    <text evidence="1">With S4 and S12 plays an important role in translational accuracy.</text>
</comment>
<comment type="function">
    <text evidence="1">Located at the back of the 30S subunit body where it stabilizes the conformation of the head with respect to the body.</text>
</comment>
<comment type="subunit">
    <text evidence="1">Part of the 30S ribosomal subunit. Contacts proteins S4 and S8.</text>
</comment>
<comment type="domain">
    <text>The N-terminal domain interacts with the head of the 30S subunit; the C-terminal domain interacts with the body and contacts protein S4. The interaction surface between S4 and S5 is involved in control of translational fidelity.</text>
</comment>
<comment type="similarity">
    <text evidence="1">Belongs to the universal ribosomal protein uS5 family.</text>
</comment>
<feature type="chain" id="PRO_1000140893" description="Small ribosomal subunit protein uS5">
    <location>
        <begin position="1"/>
        <end position="201"/>
    </location>
</feature>
<feature type="domain" description="S5 DRBM" evidence="1">
    <location>
        <begin position="34"/>
        <end position="97"/>
    </location>
</feature>
<feature type="region of interest" description="Disordered" evidence="2">
    <location>
        <begin position="1"/>
        <end position="28"/>
    </location>
</feature>
<feature type="compositionally biased region" description="Basic and acidic residues" evidence="2">
    <location>
        <begin position="14"/>
        <end position="23"/>
    </location>
</feature>
<accession>B1W3Z0</accession>
<sequence>MAGPQRRGSGAGGGERRDRKGRDGGASAAEKTAYVERVVAINRVAKVVKGGRRFSFTALVVVGDGDGTVGVGYGKAKEVPAAIAKGVEEAKKNFFKVPRIQGTIPHPITGEKAAGVVLLKPASPGTGVIAGGPVRAVLECAGVHDILSKSLGSSNAINIVHATVAALQGLQRPEEIAARRGLPLEDVAPAALLRARAGAGA</sequence>
<dbReference type="EMBL" id="AP009493">
    <property type="protein sequence ID" value="BAG19646.1"/>
    <property type="molecule type" value="Genomic_DNA"/>
</dbReference>
<dbReference type="RefSeq" id="WP_003966944.1">
    <property type="nucleotide sequence ID" value="NC_010572.1"/>
</dbReference>
<dbReference type="SMR" id="B1W3Z0"/>
<dbReference type="GeneID" id="65912391"/>
<dbReference type="KEGG" id="sgr:SGR_2817"/>
<dbReference type="eggNOG" id="COG0098">
    <property type="taxonomic scope" value="Bacteria"/>
</dbReference>
<dbReference type="HOGENOM" id="CLU_065898_1_2_11"/>
<dbReference type="Proteomes" id="UP000001685">
    <property type="component" value="Chromosome"/>
</dbReference>
<dbReference type="GO" id="GO:0015935">
    <property type="term" value="C:small ribosomal subunit"/>
    <property type="evidence" value="ECO:0007669"/>
    <property type="project" value="InterPro"/>
</dbReference>
<dbReference type="GO" id="GO:0019843">
    <property type="term" value="F:rRNA binding"/>
    <property type="evidence" value="ECO:0007669"/>
    <property type="project" value="UniProtKB-UniRule"/>
</dbReference>
<dbReference type="GO" id="GO:0003735">
    <property type="term" value="F:structural constituent of ribosome"/>
    <property type="evidence" value="ECO:0007669"/>
    <property type="project" value="InterPro"/>
</dbReference>
<dbReference type="GO" id="GO:0006412">
    <property type="term" value="P:translation"/>
    <property type="evidence" value="ECO:0007669"/>
    <property type="project" value="UniProtKB-UniRule"/>
</dbReference>
<dbReference type="FunFam" id="3.30.160.20:FF:000001">
    <property type="entry name" value="30S ribosomal protein S5"/>
    <property type="match status" value="1"/>
</dbReference>
<dbReference type="FunFam" id="3.30.230.10:FF:000002">
    <property type="entry name" value="30S ribosomal protein S5"/>
    <property type="match status" value="1"/>
</dbReference>
<dbReference type="Gene3D" id="3.30.160.20">
    <property type="match status" value="1"/>
</dbReference>
<dbReference type="Gene3D" id="3.30.230.10">
    <property type="match status" value="1"/>
</dbReference>
<dbReference type="HAMAP" id="MF_01307_B">
    <property type="entry name" value="Ribosomal_uS5_B"/>
    <property type="match status" value="1"/>
</dbReference>
<dbReference type="InterPro" id="IPR020568">
    <property type="entry name" value="Ribosomal_Su5_D2-typ_SF"/>
</dbReference>
<dbReference type="InterPro" id="IPR000851">
    <property type="entry name" value="Ribosomal_uS5"/>
</dbReference>
<dbReference type="InterPro" id="IPR005712">
    <property type="entry name" value="Ribosomal_uS5_bac-type"/>
</dbReference>
<dbReference type="InterPro" id="IPR005324">
    <property type="entry name" value="Ribosomal_uS5_C"/>
</dbReference>
<dbReference type="InterPro" id="IPR013810">
    <property type="entry name" value="Ribosomal_uS5_N"/>
</dbReference>
<dbReference type="InterPro" id="IPR018192">
    <property type="entry name" value="Ribosomal_uS5_N_CS"/>
</dbReference>
<dbReference type="InterPro" id="IPR014721">
    <property type="entry name" value="Ribsml_uS5_D2-typ_fold_subgr"/>
</dbReference>
<dbReference type="NCBIfam" id="TIGR01021">
    <property type="entry name" value="rpsE_bact"/>
    <property type="match status" value="1"/>
</dbReference>
<dbReference type="PANTHER" id="PTHR48277">
    <property type="entry name" value="MITOCHONDRIAL RIBOSOMAL PROTEIN S5"/>
    <property type="match status" value="1"/>
</dbReference>
<dbReference type="PANTHER" id="PTHR48277:SF1">
    <property type="entry name" value="MITOCHONDRIAL RIBOSOMAL PROTEIN S5"/>
    <property type="match status" value="1"/>
</dbReference>
<dbReference type="Pfam" id="PF00333">
    <property type="entry name" value="Ribosomal_S5"/>
    <property type="match status" value="1"/>
</dbReference>
<dbReference type="Pfam" id="PF03719">
    <property type="entry name" value="Ribosomal_S5_C"/>
    <property type="match status" value="1"/>
</dbReference>
<dbReference type="SUPFAM" id="SSF54768">
    <property type="entry name" value="dsRNA-binding domain-like"/>
    <property type="match status" value="1"/>
</dbReference>
<dbReference type="SUPFAM" id="SSF54211">
    <property type="entry name" value="Ribosomal protein S5 domain 2-like"/>
    <property type="match status" value="1"/>
</dbReference>
<dbReference type="PROSITE" id="PS00585">
    <property type="entry name" value="RIBOSOMAL_S5"/>
    <property type="match status" value="1"/>
</dbReference>
<dbReference type="PROSITE" id="PS50881">
    <property type="entry name" value="S5_DSRBD"/>
    <property type="match status" value="1"/>
</dbReference>
<gene>
    <name evidence="1" type="primary">rpsE</name>
    <name type="ordered locus">SGR_2817</name>
</gene>
<organism>
    <name type="scientific">Streptomyces griseus subsp. griseus (strain JCM 4626 / CBS 651.72 / NBRC 13350 / KCC S-0626 / ISP 5235)</name>
    <dbReference type="NCBI Taxonomy" id="455632"/>
    <lineage>
        <taxon>Bacteria</taxon>
        <taxon>Bacillati</taxon>
        <taxon>Actinomycetota</taxon>
        <taxon>Actinomycetes</taxon>
        <taxon>Kitasatosporales</taxon>
        <taxon>Streptomycetaceae</taxon>
        <taxon>Streptomyces</taxon>
    </lineage>
</organism>
<protein>
    <recommendedName>
        <fullName evidence="1">Small ribosomal subunit protein uS5</fullName>
    </recommendedName>
    <alternativeName>
        <fullName evidence="3">30S ribosomal protein S5</fullName>
    </alternativeName>
</protein>
<keyword id="KW-0687">Ribonucleoprotein</keyword>
<keyword id="KW-0689">Ribosomal protein</keyword>
<keyword id="KW-0694">RNA-binding</keyword>
<keyword id="KW-0699">rRNA-binding</keyword>
<reference key="1">
    <citation type="journal article" date="2008" name="J. Bacteriol.">
        <title>Genome sequence of the streptomycin-producing microorganism Streptomyces griseus IFO 13350.</title>
        <authorList>
            <person name="Ohnishi Y."/>
            <person name="Ishikawa J."/>
            <person name="Hara H."/>
            <person name="Suzuki H."/>
            <person name="Ikenoya M."/>
            <person name="Ikeda H."/>
            <person name="Yamashita A."/>
            <person name="Hattori M."/>
            <person name="Horinouchi S."/>
        </authorList>
    </citation>
    <scope>NUCLEOTIDE SEQUENCE [LARGE SCALE GENOMIC DNA]</scope>
    <source>
        <strain>JCM 4626 / CBS 651.72 / NBRC 13350 / KCC S-0626 / ISP 5235</strain>
    </source>
</reference>
<evidence type="ECO:0000255" key="1">
    <source>
        <dbReference type="HAMAP-Rule" id="MF_01307"/>
    </source>
</evidence>
<evidence type="ECO:0000256" key="2">
    <source>
        <dbReference type="SAM" id="MobiDB-lite"/>
    </source>
</evidence>
<evidence type="ECO:0000305" key="3"/>
<name>RS5_STRGG</name>